<dbReference type="EMBL" id="AL590448">
    <property type="protein sequence ID" value="CAD26465.1"/>
    <property type="molecule type" value="Genomic_DNA"/>
</dbReference>
<dbReference type="RefSeq" id="NP_597289.1">
    <property type="nucleotide sequence ID" value="NM_001041898.1"/>
</dbReference>
<dbReference type="SMR" id="Q8SUL0"/>
<dbReference type="FunCoup" id="Q8SUL0">
    <property type="interactions" value="249"/>
</dbReference>
<dbReference type="STRING" id="284813.Q8SUL0"/>
<dbReference type="GeneID" id="859711"/>
<dbReference type="KEGG" id="ecu:ECU08_1610"/>
<dbReference type="VEuPathDB" id="MicrosporidiaDB:ECU08_1610"/>
<dbReference type="HOGENOM" id="CLU_043216_3_0_1"/>
<dbReference type="InParanoid" id="Q8SUL0"/>
<dbReference type="OMA" id="ATRVYEQ"/>
<dbReference type="OrthoDB" id="10253092at2759"/>
<dbReference type="Proteomes" id="UP000000819">
    <property type="component" value="Chromosome VIII"/>
</dbReference>
<dbReference type="GO" id="GO:0005737">
    <property type="term" value="C:cytoplasm"/>
    <property type="evidence" value="ECO:0007669"/>
    <property type="project" value="UniProtKB-SubCell"/>
</dbReference>
<dbReference type="GO" id="GO:0042254">
    <property type="term" value="P:ribosome biogenesis"/>
    <property type="evidence" value="ECO:0007669"/>
    <property type="project" value="UniProtKB-KW"/>
</dbReference>
<dbReference type="Gene3D" id="3.30.1250.10">
    <property type="entry name" value="Ribosome maturation protein SBDS, N-terminal domain"/>
    <property type="match status" value="1"/>
</dbReference>
<dbReference type="InterPro" id="IPR036786">
    <property type="entry name" value="Ribosome_mat_SBDS_N_sf"/>
</dbReference>
<dbReference type="InterPro" id="IPR039100">
    <property type="entry name" value="Sdo1/SBDS-like"/>
</dbReference>
<dbReference type="InterPro" id="IPR019783">
    <property type="entry name" value="SDO1/SBDS_N"/>
</dbReference>
<dbReference type="PANTHER" id="PTHR10927">
    <property type="entry name" value="RIBOSOME MATURATION PROTEIN SBDS"/>
    <property type="match status" value="1"/>
</dbReference>
<dbReference type="PANTHER" id="PTHR10927:SF1">
    <property type="entry name" value="RIBOSOME MATURATION PROTEIN SBDS"/>
    <property type="match status" value="1"/>
</dbReference>
<dbReference type="Pfam" id="PF01172">
    <property type="entry name" value="SBDS_N"/>
    <property type="match status" value="1"/>
</dbReference>
<dbReference type="SUPFAM" id="SSF89895">
    <property type="entry name" value="FYSH domain"/>
    <property type="match status" value="1"/>
</dbReference>
<comment type="function">
    <text evidence="1">May be involved in the biogenesis of the 60S ribosomal subunit and translational activation of ribosomes.</text>
</comment>
<comment type="subunit">
    <text evidence="1">Associates with the 60S ribosomal subunit.</text>
</comment>
<comment type="subcellular location">
    <subcellularLocation>
        <location evidence="1">Cytoplasm</location>
    </subcellularLocation>
</comment>
<comment type="developmental stage">
    <text evidence="2">Expressed in late sporogonial stages.</text>
</comment>
<comment type="similarity">
    <text evidence="3">Belongs to the SDO1/SBDS family.</text>
</comment>
<feature type="chain" id="PRO_0000383043" description="Ribosome maturation protein SDO1">
    <location>
        <begin position="1"/>
        <end position="223"/>
    </location>
</feature>
<sequence length="223" mass="26150">MFTPLNQKKLVNVSIVTLKKFGRRYELAVYPNKLYEYRNGMRTPLSEILQTDTIYRSVSKGEIARQGDLDLFCRTHEEIVREILDCGYEQKSEATRVYEQEKTEREIVQILRNKVTRGGRHLSEASLREAIGKVHNIYVGNSKKQSQEILSKLEKMGFDRVGVRVSVEMSDKVAEFVKQNGEIHDGYVMIRSDCFPRFKDMCEKEKVRYLILRREEPEDEEIC</sequence>
<evidence type="ECO:0000250" key="1"/>
<evidence type="ECO:0000269" key="2">
    <source>
    </source>
</evidence>
<evidence type="ECO:0000305" key="3"/>
<reference key="1">
    <citation type="journal article" date="2001" name="Nature">
        <title>Genome sequence and gene compaction of the eukaryote parasite Encephalitozoon cuniculi.</title>
        <authorList>
            <person name="Katinka M.D."/>
            <person name="Duprat S."/>
            <person name="Cornillot E."/>
            <person name="Metenier G."/>
            <person name="Thomarat F."/>
            <person name="Prensier G."/>
            <person name="Barbe V."/>
            <person name="Peyretaillade E."/>
            <person name="Brottier P."/>
            <person name="Wincker P."/>
            <person name="Delbac F."/>
            <person name="El Alaoui H."/>
            <person name="Peyret P."/>
            <person name="Saurin W."/>
            <person name="Gouy M."/>
            <person name="Weissenbach J."/>
            <person name="Vivares C.P."/>
        </authorList>
    </citation>
    <scope>NUCLEOTIDE SEQUENCE [LARGE SCALE GENOMIC DNA]</scope>
    <source>
        <strain>GB-M1</strain>
    </source>
</reference>
<reference key="2">
    <citation type="journal article" date="2006" name="Proteomics">
        <title>Proteomic analysis of the eukaryotic parasite Encephalitozoon cuniculi (microsporidia): a reference map for proteins expressed in late sporogonial stages.</title>
        <authorList>
            <person name="Brosson D."/>
            <person name="Kuhn L."/>
            <person name="Delbac F."/>
            <person name="Garin J."/>
            <person name="Vivares C.P."/>
            <person name="Texier C."/>
        </authorList>
    </citation>
    <scope>IDENTIFICATION BY MASS SPECTROMETRY [LARGE SCALE ANALYSIS]</scope>
    <scope>DEVELOPMENTAL STAGE</scope>
    <scope>SUBCELLULAR LOCATION</scope>
</reference>
<organism>
    <name type="scientific">Encephalitozoon cuniculi (strain GB-M1)</name>
    <name type="common">Microsporidian parasite</name>
    <dbReference type="NCBI Taxonomy" id="284813"/>
    <lineage>
        <taxon>Eukaryota</taxon>
        <taxon>Fungi</taxon>
        <taxon>Fungi incertae sedis</taxon>
        <taxon>Microsporidia</taxon>
        <taxon>Unikaryonidae</taxon>
        <taxon>Encephalitozoon</taxon>
    </lineage>
</organism>
<accession>Q8SUL0</accession>
<protein>
    <recommendedName>
        <fullName>Ribosome maturation protein SDO1</fullName>
    </recommendedName>
</protein>
<keyword id="KW-0963">Cytoplasm</keyword>
<keyword id="KW-1185">Reference proteome</keyword>
<keyword id="KW-0690">Ribosome biogenesis</keyword>
<proteinExistence type="evidence at protein level"/>
<name>SDO1_ENCCU</name>
<gene>
    <name type="primary">SDO1</name>
    <name type="ordered locus">ECU08_1610</name>
</gene>